<keyword id="KW-0007">Acetylation</keyword>
<keyword id="KW-0156">Chromatin regulator</keyword>
<keyword id="KW-0217">Developmental protein</keyword>
<keyword id="KW-0221">Differentiation</keyword>
<keyword id="KW-0287">Flowering</keyword>
<keyword id="KW-0539">Nucleus</keyword>
<keyword id="KW-1185">Reference proteome</keyword>
<keyword id="KW-0677">Repeat</keyword>
<keyword id="KW-0678">Repressor</keyword>
<keyword id="KW-0804">Transcription</keyword>
<keyword id="KW-0805">Transcription regulation</keyword>
<keyword id="KW-0853">WD repeat</keyword>
<gene>
    <name evidence="16" type="primary">MSI4</name>
    <name evidence="14" type="synonym">ACG1</name>
    <name evidence="13 15" type="synonym">FVE</name>
    <name evidence="18" type="ordered locus">At2g19520</name>
    <name evidence="19" type="ORF">F3P11.12</name>
</gene>
<proteinExistence type="evidence at protein level"/>
<name>MSI4_ARATH</name>
<sequence length="507" mass="55759">MESDEAAAVSPQATTPSGGTGASGPKKRGRKPKTKEDSQTPSSQQQSDVKMKESGKKTQQSPSVDEKYSQWKGLVPILYDWLANHNLVWPSLSCRWGPQLEQATYKNRQRLYLSEQTDGSVPNTLVIANCEVVKPRVAAAEHISQFNEEARSPFVKKYKTIIHPGEVNRIRELPQNSKIVATHTDSPDVLIWDVETQPNRHAVLGAANSRPDLILTGHQDNAEFALAMCPTEPFVLSGGKDKSVVLWSIQDHITTIGTDSKSSGSIIKQTGEGTDKNESPTVGPRGVYHGHEDTVEDVAFSPTSAQEFCSVGDDSCLILWDARTGTNPVTKVEKAHDADLHCVDWNPHDDNLILTGSADNTVRLFDRRKLTANGVGSPIYKFEGHKAAVLCVQWSPDKSSVFGSSAEDGLLNIWDYDRVSKKSDRAAKSPAGLFFQHAGHRDKVVDFHWNASDPWTIVSVSDDCETTGGGGTLQIWRMSDLIYRPEEEVVAELEKFKSHVMTCASKP</sequence>
<comment type="function">
    <text evidence="4 5 6 7 10 11 12">Core histone-binding subunit that may target chromatin assembly factors, chromatin remodeling factors and histone deacetylases to their histone substrates in a manner that is regulated by nucleosomal DNA. Component of the flowering autonomous pathway which positively regulates flowering by promoting transcriptional repression of the flowering repressor FLC. May promote histone deacetylation at the FLC locus leading to the formation of repressive chromatin structures. Forms a histone deacetylase complex with HDA5, HDA6 and FLD that represses FLC gene expression to control flowering time (PubMed:25922987). Also negatively regulates cold-responsive genes. Acts together with PDP1 and MSI5 to regulate the function of the PRC2 complex on FLC (PubMed:29314758). Required for systemic acquired resistance (SAR) toward pathogenic bacteria (e.g. Pseudomonas syringae pv tomato DC3000 (avrPto)) (PubMed:32392578). Together with FLD and MSI4/FVE, contributes to dehydroabietinal-dependent (DA, a diterpenoid tricyclic diterpene) activation of flowering ans SAR (PubMed:32392578).</text>
</comment>
<comment type="subunit">
    <text evidence="8 9 11">Interacts with AHL16 and HOS1 (PubMed:22960247, PubMed:23394836). Interacts with LHP1, PDP1, PDP2 and PDP3 (PubMed:29314758). Component of the PRC2 (polycomb repressive complex 2) complex which regulates histone methylation on histone H3K27 (PubMed:29314758).</text>
</comment>
<comment type="interaction">
    <interactant intactId="EBI-9661079">
        <id>O22607</id>
    </interactant>
    <interactant intactId="EBI-307155">
        <id>P93831</id>
        <label>CLF</label>
    </interactant>
    <organismsDiffer>false</organismsDiffer>
    <experiments>3</experiments>
</comment>
<comment type="interaction">
    <interactant intactId="EBI-9661079">
        <id>O22607</id>
    </interactant>
    <interactant intactId="EBI-1632780">
        <id>Q9M0V3</id>
        <label>DDB1A</label>
    </interactant>
    <organismsDiffer>false</organismsDiffer>
    <experiments>2</experiments>
</comment>
<comment type="subcellular location">
    <subcellularLocation>
        <location evidence="6 8">Nucleus</location>
    </subcellularLocation>
</comment>
<comment type="tissue specificity">
    <text evidence="6">Expressed in rosette leaves, cauline leaves, main stems and developing fruits. Expressed at higher levels in roots and flowers.</text>
</comment>
<comment type="induction">
    <text evidence="12">Induced by dehydroabietinal-dependent (DA), a diterpenoid tricyclic diterpene that promotes flowering and systemic acquired resistance (SAR).</text>
</comment>
<comment type="domain">
    <text evidence="1">The DWD box is required for interaction with DDB1A.</text>
</comment>
<comment type="disruption phenotype">
    <text evidence="11 12">Reduced H3K27me3 level but increased levels of histone H3 acetylation and H3K4me3 on FLC in the fve msi5 double mutant (PubMed:29314758). Delayed flowering (PubMed:32392578). Impaired systemic acquired resistance (SAR) toward pathogenic bacteria (e.g. Pseudomonas syringae pv tomato DC3000 (avrPto)) (PubMed:32392578). Lost ability of dehydroabietinal-dependent (DA, a diterpenoid tricyclic diterpene) to trigger flowering and systemic acquired resistance (SAR) (PubMed:32392578).</text>
</comment>
<comment type="miscellaneous">
    <text>Binds zinc.</text>
</comment>
<comment type="similarity">
    <text evidence="17">Belongs to the WD repeat RBAP46/RBAP48/MSI1 family.</text>
</comment>
<comment type="sequence caution" evidence="17">
    <conflict type="erroneous initiation">
        <sequence resource="EMBL-CDS" id="AAD10151"/>
    </conflict>
    <text>Truncated N-terminus.</text>
</comment>
<comment type="sequence caution" evidence="17">
    <conflict type="frameshift">
        <sequence resource="EMBL-CDS" id="CAA85542"/>
    </conflict>
</comment>
<reference key="1">
    <citation type="journal article" date="2004" name="Nat. Genet.">
        <title>Regulation of flowering time by FVE, a retinoblastoma-associated protein.</title>
        <authorList>
            <person name="Ausin I."/>
            <person name="Alonso-Blanco C."/>
            <person name="Jarillo J.A."/>
            <person name="Ruiz-Garcia L."/>
            <person name="Martinez-Zapater J.M."/>
        </authorList>
    </citation>
    <scope>NUCLEOTIDE SEQUENCE [GENOMIC DNA / MRNA]</scope>
    <scope>FUNCTION</scope>
    <scope>SUBCELLULAR LOCATION</scope>
    <scope>TISSUE SPECIFICITY</scope>
    <scope>MUTAGENESIS OF ALA-222 AND ASP-241</scope>
    <source>
        <strain>cv. Landsberg erecta</strain>
    </source>
</reference>
<reference key="2">
    <citation type="journal article" date="2005" name="Genetics">
        <title>FRIGIDA-independent variation in flowering time of natural Arabidopsis thaliana accessions.</title>
        <authorList>
            <person name="Werner J.D."/>
            <person name="Borevitz J.O."/>
            <person name="Uhlenhaut N.H."/>
            <person name="Ecker J.R."/>
            <person name="Chory J."/>
            <person name="Weigel D."/>
        </authorList>
    </citation>
    <scope>NUCLEOTIDE SEQUENCE [GENOMIC DNA]</scope>
</reference>
<reference key="3">
    <citation type="journal article" date="1999" name="Nature">
        <title>Sequence and analysis of chromosome 2 of the plant Arabidopsis thaliana.</title>
        <authorList>
            <person name="Lin X."/>
            <person name="Kaul S."/>
            <person name="Rounsley S.D."/>
            <person name="Shea T.P."/>
            <person name="Benito M.-I."/>
            <person name="Town C.D."/>
            <person name="Fujii C.Y."/>
            <person name="Mason T.M."/>
            <person name="Bowman C.L."/>
            <person name="Barnstead M.E."/>
            <person name="Feldblyum T.V."/>
            <person name="Buell C.R."/>
            <person name="Ketchum K.A."/>
            <person name="Lee J.J."/>
            <person name="Ronning C.M."/>
            <person name="Koo H.L."/>
            <person name="Moffat K.S."/>
            <person name="Cronin L.A."/>
            <person name="Shen M."/>
            <person name="Pai G."/>
            <person name="Van Aken S."/>
            <person name="Umayam L."/>
            <person name="Tallon L.J."/>
            <person name="Gill J.E."/>
            <person name="Adams M.D."/>
            <person name="Carrera A.J."/>
            <person name="Creasy T.H."/>
            <person name="Goodman H.M."/>
            <person name="Somerville C.R."/>
            <person name="Copenhaver G.P."/>
            <person name="Preuss D."/>
            <person name="Nierman W.C."/>
            <person name="White O."/>
            <person name="Eisen J.A."/>
            <person name="Salzberg S.L."/>
            <person name="Fraser C.M."/>
            <person name="Venter J.C."/>
        </authorList>
    </citation>
    <scope>NUCLEOTIDE SEQUENCE [LARGE SCALE GENOMIC DNA]</scope>
    <source>
        <strain>cv. Columbia</strain>
    </source>
</reference>
<reference key="4">
    <citation type="journal article" date="2017" name="Plant J.">
        <title>Araport11: a complete reannotation of the Arabidopsis thaliana reference genome.</title>
        <authorList>
            <person name="Cheng C.Y."/>
            <person name="Krishnakumar V."/>
            <person name="Chan A.P."/>
            <person name="Thibaud-Nissen F."/>
            <person name="Schobel S."/>
            <person name="Town C.D."/>
        </authorList>
    </citation>
    <scope>GENOME REANNOTATION</scope>
    <source>
        <strain>cv. Columbia</strain>
    </source>
</reference>
<reference key="5">
    <citation type="journal article" date="2003" name="Science">
        <title>Empirical analysis of transcriptional activity in the Arabidopsis genome.</title>
        <authorList>
            <person name="Yamada K."/>
            <person name="Lim J."/>
            <person name="Dale J.M."/>
            <person name="Chen H."/>
            <person name="Shinn P."/>
            <person name="Palm C.J."/>
            <person name="Southwick A.M."/>
            <person name="Wu H.C."/>
            <person name="Kim C.J."/>
            <person name="Nguyen M."/>
            <person name="Pham P.K."/>
            <person name="Cheuk R.F."/>
            <person name="Karlin-Newmann G."/>
            <person name="Liu S.X."/>
            <person name="Lam B."/>
            <person name="Sakano H."/>
            <person name="Wu T."/>
            <person name="Yu G."/>
            <person name="Miranda M."/>
            <person name="Quach H.L."/>
            <person name="Tripp M."/>
            <person name="Chang C.H."/>
            <person name="Lee J.M."/>
            <person name="Toriumi M.J."/>
            <person name="Chan M.M."/>
            <person name="Tang C.C."/>
            <person name="Onodera C.S."/>
            <person name="Deng J.M."/>
            <person name="Akiyama K."/>
            <person name="Ansari Y."/>
            <person name="Arakawa T."/>
            <person name="Banh J."/>
            <person name="Banno F."/>
            <person name="Bowser L."/>
            <person name="Brooks S.Y."/>
            <person name="Carninci P."/>
            <person name="Chao Q."/>
            <person name="Choy N."/>
            <person name="Enju A."/>
            <person name="Goldsmith A.D."/>
            <person name="Gurjal M."/>
            <person name="Hansen N.F."/>
            <person name="Hayashizaki Y."/>
            <person name="Johnson-Hopson C."/>
            <person name="Hsuan V.W."/>
            <person name="Iida K."/>
            <person name="Karnes M."/>
            <person name="Khan S."/>
            <person name="Koesema E."/>
            <person name="Ishida J."/>
            <person name="Jiang P.X."/>
            <person name="Jones T."/>
            <person name="Kawai J."/>
            <person name="Kamiya A."/>
            <person name="Meyers C."/>
            <person name="Nakajima M."/>
            <person name="Narusaka M."/>
            <person name="Seki M."/>
            <person name="Sakurai T."/>
            <person name="Satou M."/>
            <person name="Tamse R."/>
            <person name="Vaysberg M."/>
            <person name="Wallender E.K."/>
            <person name="Wong C."/>
            <person name="Yamamura Y."/>
            <person name="Yuan S."/>
            <person name="Shinozaki K."/>
            <person name="Davis R.W."/>
            <person name="Theologis A."/>
            <person name="Ecker J.R."/>
        </authorList>
    </citation>
    <scope>NUCLEOTIDE SEQUENCE [LARGE SCALE MRNA]</scope>
    <source>
        <strain>cv. Columbia</strain>
    </source>
</reference>
<reference key="6">
    <citation type="journal article" date="1998" name="FEBS Lett.">
        <title>AtMSI4 and RbAp48 WD-40 repeat proteins bind metal ions.</title>
        <authorList>
            <person name="Kenzior A.L."/>
            <person name="Folk W.R."/>
        </authorList>
    </citation>
    <scope>NUCLEOTIDE SEQUENCE [MRNA] OF 4-507</scope>
    <scope>ZINC-BINDING</scope>
    <source>
        <strain>cv. Columbia</strain>
    </source>
</reference>
<reference key="7">
    <citation type="journal article" date="1996" name="Plant J.">
        <title>Further progress towards a catalogue of all Arabidopsis genes: analysis of a set of 5000 non-redundant ESTs.</title>
        <authorList>
            <person name="Cooke R."/>
            <person name="Raynal M."/>
            <person name="Laudie M."/>
            <person name="Grellet F."/>
            <person name="Delseny M."/>
            <person name="Morris P.-C."/>
            <person name="Guerrier D."/>
            <person name="Giraudat J."/>
            <person name="Quigley F."/>
            <person name="Clabault G."/>
            <person name="Li Y.-F."/>
            <person name="Mache R."/>
            <person name="Krivitzky M."/>
            <person name="Gy I.J.-J."/>
            <person name="Kreis M."/>
            <person name="Lecharny A."/>
            <person name="Parmentier Y."/>
            <person name="Marbach J."/>
            <person name="Fleck J."/>
            <person name="Clement B."/>
            <person name="Philipps G."/>
            <person name="Herve C."/>
            <person name="Bardet C."/>
            <person name="Tremousaygue D."/>
            <person name="Lescure B."/>
            <person name="Lacomme C."/>
            <person name="Roby D."/>
            <person name="Jourjon M.-F."/>
            <person name="Chabrier P."/>
            <person name="Charpenteau J.-L."/>
            <person name="Desprez T."/>
            <person name="Amselem J."/>
            <person name="Chiapello H."/>
            <person name="Hoefte H."/>
        </authorList>
    </citation>
    <scope>NUCLEOTIDE SEQUENCE [LARGE SCALE MRNA] OF 1-142 AND 452-507</scope>
    <source>
        <strain>cv. Columbia</strain>
        <tissue>Green siliques</tissue>
    </source>
</reference>
<reference key="8">
    <citation type="journal article" date="2003" name="Nat. Genet.">
        <title>A thermosensory pathway controlling flowering time in Arabidopsis thaliana.</title>
        <authorList>
            <person name="Blazquez M.A."/>
            <person name="Ahn J.H."/>
            <person name="Weigel D."/>
        </authorList>
    </citation>
    <scope>FUNCTION</scope>
</reference>
<reference key="9">
    <citation type="journal article" date="2003" name="Science">
        <title>Regulation of flowering time by histone acetylation in Arabidopsis.</title>
        <authorList>
            <person name="He Y."/>
            <person name="Michaels S.D."/>
            <person name="Amasino R.M."/>
        </authorList>
    </citation>
    <scope>FUNCTION</scope>
</reference>
<reference key="10">
    <citation type="journal article" date="2004" name="Nat. Genet.">
        <title>A genetic link between cold responses and flowering time through FVE in Arabidopsis thaliana.</title>
        <authorList>
            <person name="Kim H.-J."/>
            <person name="Hyun Y."/>
            <person name="Park J.-Y."/>
            <person name="Park M.-J."/>
            <person name="Park M.-K."/>
            <person name="Kim M.D."/>
            <person name="Kim H.-J."/>
            <person name="Lee M.H."/>
            <person name="Moon J."/>
            <person name="Lee I."/>
            <person name="Kim J."/>
        </authorList>
    </citation>
    <scope>FUNCTION</scope>
</reference>
<reference key="11">
    <citation type="journal article" date="2008" name="Plant Cell">
        <title>Characterization of Arabidopsis and rice DWD proteins and their roles as substrate receptors for CUL4-RING E3 ubiquitin ligases.</title>
        <authorList>
            <person name="Lee J.H."/>
            <person name="Terzaghi W."/>
            <person name="Gusmaroli G."/>
            <person name="Charron J.B."/>
            <person name="Yoon H.J."/>
            <person name="Chen H."/>
            <person name="He Y.J."/>
            <person name="Xiong Y."/>
            <person name="Deng X.W."/>
        </authorList>
    </citation>
    <scope>DWD MOTIF</scope>
</reference>
<reference key="12">
    <citation type="journal article" date="2012" name="Mol. Cell. Proteomics">
        <title>Comparative large-scale characterisation of plant vs. mammal proteins reveals similar and idiosyncratic N-alpha acetylation features.</title>
        <authorList>
            <person name="Bienvenut W.V."/>
            <person name="Sumpton D."/>
            <person name="Martinez A."/>
            <person name="Lilla S."/>
            <person name="Espagne C."/>
            <person name="Meinnel T."/>
            <person name="Giglione C."/>
        </authorList>
    </citation>
    <scope>ACETYLATION [LARGE SCALE ANALYSIS] AT MET-1</scope>
    <scope>IDENTIFICATION BY MASS SPECTROMETRY [LARGE SCALE ANALYSIS]</scope>
</reference>
<reference key="13">
    <citation type="journal article" date="2012" name="Plant Cell Physiol.">
        <title>The E3 ubiquitin ligase HOS1 regulates low ambient temperature-responsive flowering in Arabidopsis thaliana.</title>
        <authorList>
            <person name="Lee J.H."/>
            <person name="Kim J.J."/>
            <person name="Kim S.H."/>
            <person name="Cho H.J."/>
            <person name="Kim J."/>
            <person name="Ahn J.H."/>
        </authorList>
    </citation>
    <scope>INTERACTION WITH HOS1</scope>
    <scope>SUBCELLULAR LOCATION</scope>
</reference>
<reference key="14">
    <citation type="journal article" date="2013" name="Curr. Biol.">
        <title>A matrix protein silences transposons and repeats through interaction with retinoblastoma-associated proteins.</title>
        <authorList>
            <person name="Xu Y."/>
            <person name="Wang Y."/>
            <person name="Stroud H."/>
            <person name="Gu X."/>
            <person name="Sun B."/>
            <person name="Gan E.S."/>
            <person name="Ng K.H."/>
            <person name="Jacobsen S.E."/>
            <person name="He Y."/>
            <person name="Ito T."/>
        </authorList>
    </citation>
    <scope>INTERACTION WITH AHL16</scope>
</reference>
<reference key="15">
    <citation type="journal article" date="2015" name="Plant J.">
        <title>Regulation of flowering time by the histone deacetylase HDA5 in Arabidopsis.</title>
        <authorList>
            <person name="Luo M."/>
            <person name="Tai R."/>
            <person name="Yu C.W."/>
            <person name="Yang S."/>
            <person name="Chen C.Y."/>
            <person name="Lin W.D."/>
            <person name="Schmidt W."/>
            <person name="Wu K."/>
        </authorList>
    </citation>
    <scope>FUNCTION</scope>
</reference>
<reference key="16">
    <citation type="journal article" date="2018" name="J. Integr. Plant Biol.">
        <title>Arabidopsis PWWP domain proteins mediate H3K27 trimethylation on FLC and regulate flowering time.</title>
        <authorList>
            <person name="Zhou J.X."/>
            <person name="Liu Z.W."/>
            <person name="Li Y.Q."/>
            <person name="Li L."/>
            <person name="Wang B."/>
            <person name="Chen S."/>
            <person name="He X.J."/>
        </authorList>
    </citation>
    <scope>FUNCTION</scope>
    <scope>DISRUPTION PHENOTYPE</scope>
    <scope>INTERACTION WITH LHP1; PDP1; PDP2 AND PDP3</scope>
    <scope>SUBUNIT</scope>
</reference>
<reference key="17">
    <citation type="journal article" date="2020" name="J. Exp. Bot.">
        <title>Dehydroabietinal promotes flowering time and plant defense in Arabidopsis via the autonomous pathway genes FLOWERING LOCUS D, FVE, and RELATIVE OF EARLY FLOWERING 6.</title>
        <authorList>
            <person name="Chowdhury Z."/>
            <person name="Mohanty D."/>
            <person name="Giri M.K."/>
            <person name="Venables B.J."/>
            <person name="Chaturvedi R."/>
            <person name="Chao A."/>
            <person name="Petros R.A."/>
            <person name="Shah J."/>
        </authorList>
    </citation>
    <scope>FUNCTION</scope>
    <scope>DISRUPTION PHENOTYPE</scope>
    <scope>INDUCTION BY DEHYDROABIETINAL</scope>
    <source>
        <strain>cv. Columbia</strain>
        <strain>cv. Landsberg erecta</strain>
        <strain>cv. No-0</strain>
        <strain>cv. Wassilewskija</strain>
    </source>
</reference>
<dbReference type="EMBL" id="AF498101">
    <property type="protein sequence ID" value="AAP29474.1"/>
    <property type="molecule type" value="Genomic_DNA"/>
</dbReference>
<dbReference type="EMBL" id="AF498102">
    <property type="protein sequence ID" value="AAP29475.1"/>
    <property type="molecule type" value="mRNA"/>
</dbReference>
<dbReference type="EMBL" id="AY849994">
    <property type="protein sequence ID" value="AAX51264.1"/>
    <property type="molecule type" value="Genomic_DNA"/>
</dbReference>
<dbReference type="EMBL" id="AC005917">
    <property type="protein sequence ID" value="AAD10151.2"/>
    <property type="status" value="ALT_INIT"/>
    <property type="molecule type" value="Genomic_DNA"/>
</dbReference>
<dbReference type="EMBL" id="CP002685">
    <property type="protein sequence ID" value="AEC06891.1"/>
    <property type="molecule type" value="Genomic_DNA"/>
</dbReference>
<dbReference type="EMBL" id="AY059799">
    <property type="protein sequence ID" value="AAL24281.1"/>
    <property type="molecule type" value="mRNA"/>
</dbReference>
<dbReference type="EMBL" id="AY057655">
    <property type="protein sequence ID" value="AAL15286.1"/>
    <property type="molecule type" value="mRNA"/>
</dbReference>
<dbReference type="EMBL" id="AY081447">
    <property type="protein sequence ID" value="AAM10009.1"/>
    <property type="molecule type" value="mRNA"/>
</dbReference>
<dbReference type="EMBL" id="AF028711">
    <property type="protein sequence ID" value="AAD03340.1"/>
    <property type="molecule type" value="mRNA"/>
</dbReference>
<dbReference type="EMBL" id="Z37286">
    <property type="protein sequence ID" value="CAA85542.1"/>
    <property type="status" value="ALT_FRAME"/>
    <property type="molecule type" value="mRNA"/>
</dbReference>
<dbReference type="EMBL" id="Z37287">
    <property type="protein sequence ID" value="CAA85543.1"/>
    <property type="molecule type" value="mRNA"/>
</dbReference>
<dbReference type="PIR" id="G84577">
    <property type="entry name" value="G84577"/>
</dbReference>
<dbReference type="RefSeq" id="NP_565456.2">
    <property type="nucleotide sequence ID" value="NM_127510.5"/>
</dbReference>
<dbReference type="SMR" id="O22607"/>
<dbReference type="BioGRID" id="1826">
    <property type="interactions" value="35"/>
</dbReference>
<dbReference type="DIP" id="DIP-59614N"/>
<dbReference type="FunCoup" id="O22607">
    <property type="interactions" value="1326"/>
</dbReference>
<dbReference type="IntAct" id="O22607">
    <property type="interactions" value="10"/>
</dbReference>
<dbReference type="STRING" id="3702.O22607"/>
<dbReference type="iPTMnet" id="O22607"/>
<dbReference type="PaxDb" id="3702-AT2G19520.1"/>
<dbReference type="ProteomicsDB" id="250785"/>
<dbReference type="EnsemblPlants" id="AT2G19520.1">
    <property type="protein sequence ID" value="AT2G19520.1"/>
    <property type="gene ID" value="AT2G19520"/>
</dbReference>
<dbReference type="GeneID" id="816471"/>
<dbReference type="Gramene" id="AT2G19520.1">
    <property type="protein sequence ID" value="AT2G19520.1"/>
    <property type="gene ID" value="AT2G19520"/>
</dbReference>
<dbReference type="KEGG" id="ath:AT2G19520"/>
<dbReference type="Araport" id="AT2G19520"/>
<dbReference type="TAIR" id="AT2G19520">
    <property type="gene designation" value="FVE"/>
</dbReference>
<dbReference type="eggNOG" id="KOG0264">
    <property type="taxonomic scope" value="Eukaryota"/>
</dbReference>
<dbReference type="HOGENOM" id="CLU_020445_2_0_1"/>
<dbReference type="InParanoid" id="O22607"/>
<dbReference type="OMA" id="WARWIAL"/>
<dbReference type="OrthoDB" id="427795at2759"/>
<dbReference type="PhylomeDB" id="O22607"/>
<dbReference type="CD-CODE" id="4299E36E">
    <property type="entry name" value="Nucleolus"/>
</dbReference>
<dbReference type="PRO" id="PR:O22607"/>
<dbReference type="Proteomes" id="UP000006548">
    <property type="component" value="Chromosome 2"/>
</dbReference>
<dbReference type="ExpressionAtlas" id="O22607">
    <property type="expression patterns" value="baseline and differential"/>
</dbReference>
<dbReference type="GO" id="GO:0080008">
    <property type="term" value="C:Cul4-RING E3 ubiquitin ligase complex"/>
    <property type="evidence" value="ECO:0000250"/>
    <property type="project" value="TAIR"/>
</dbReference>
<dbReference type="GO" id="GO:0005737">
    <property type="term" value="C:cytoplasm"/>
    <property type="evidence" value="ECO:0007005"/>
    <property type="project" value="TAIR"/>
</dbReference>
<dbReference type="GO" id="GO:0005829">
    <property type="term" value="C:cytosol"/>
    <property type="evidence" value="ECO:0007005"/>
    <property type="project" value="TAIR"/>
</dbReference>
<dbReference type="GO" id="GO:0035098">
    <property type="term" value="C:ESC/E(Z) complex"/>
    <property type="evidence" value="ECO:0000314"/>
    <property type="project" value="UniProtKB"/>
</dbReference>
<dbReference type="GO" id="GO:0000118">
    <property type="term" value="C:histone deacetylase complex"/>
    <property type="evidence" value="ECO:0000314"/>
    <property type="project" value="TAIR"/>
</dbReference>
<dbReference type="GO" id="GO:0005739">
    <property type="term" value="C:mitochondrion"/>
    <property type="evidence" value="ECO:0007005"/>
    <property type="project" value="TAIR"/>
</dbReference>
<dbReference type="GO" id="GO:0005730">
    <property type="term" value="C:nucleolus"/>
    <property type="evidence" value="ECO:0007005"/>
    <property type="project" value="TAIR"/>
</dbReference>
<dbReference type="GO" id="GO:0005634">
    <property type="term" value="C:nucleus"/>
    <property type="evidence" value="ECO:0000314"/>
    <property type="project" value="UniProtKB"/>
</dbReference>
<dbReference type="GO" id="GO:0046872">
    <property type="term" value="F:metal ion binding"/>
    <property type="evidence" value="ECO:0000314"/>
    <property type="project" value="TAIR"/>
</dbReference>
<dbReference type="GO" id="GO:0030154">
    <property type="term" value="P:cell differentiation"/>
    <property type="evidence" value="ECO:0007669"/>
    <property type="project" value="UniProtKB-KW"/>
</dbReference>
<dbReference type="GO" id="GO:0006281">
    <property type="term" value="P:DNA repair"/>
    <property type="evidence" value="ECO:0000315"/>
    <property type="project" value="TAIR"/>
</dbReference>
<dbReference type="GO" id="GO:0040029">
    <property type="term" value="P:epigenetic regulation of gene expression"/>
    <property type="evidence" value="ECO:0000315"/>
    <property type="project" value="UniProtKB"/>
</dbReference>
<dbReference type="GO" id="GO:0009908">
    <property type="term" value="P:flower development"/>
    <property type="evidence" value="ECO:0007669"/>
    <property type="project" value="UniProtKB-KW"/>
</dbReference>
<dbReference type="GO" id="GO:0080188">
    <property type="term" value="P:gene silencing by siRNA-directed DNA methylation"/>
    <property type="evidence" value="ECO:0000314"/>
    <property type="project" value="TAIR"/>
</dbReference>
<dbReference type="GO" id="GO:0006355">
    <property type="term" value="P:regulation of DNA-templated transcription"/>
    <property type="evidence" value="ECO:0000315"/>
    <property type="project" value="UniProtKB"/>
</dbReference>
<dbReference type="GO" id="GO:2000028">
    <property type="term" value="P:regulation of photoperiodism, flowering"/>
    <property type="evidence" value="ECO:0000315"/>
    <property type="project" value="UniProtKB"/>
</dbReference>
<dbReference type="GO" id="GO:0048510">
    <property type="term" value="P:regulation of timing of transition from vegetative to reproductive phase"/>
    <property type="evidence" value="ECO:0000315"/>
    <property type="project" value="UniProtKB"/>
</dbReference>
<dbReference type="GO" id="GO:1904629">
    <property type="term" value="P:response to diterpene"/>
    <property type="evidence" value="ECO:0000315"/>
    <property type="project" value="UniProtKB"/>
</dbReference>
<dbReference type="GO" id="GO:0010224">
    <property type="term" value="P:response to UV-B"/>
    <property type="evidence" value="ECO:0000270"/>
    <property type="project" value="TAIR"/>
</dbReference>
<dbReference type="GO" id="GO:0009627">
    <property type="term" value="P:systemic acquired resistance"/>
    <property type="evidence" value="ECO:0000315"/>
    <property type="project" value="UniProtKB"/>
</dbReference>
<dbReference type="FunFam" id="2.130.10.10:FF:000857">
    <property type="entry name" value="WD-40 repeat-containing protein MSI4"/>
    <property type="match status" value="1"/>
</dbReference>
<dbReference type="Gene3D" id="2.130.10.10">
    <property type="entry name" value="YVTN repeat-like/Quinoprotein amine dehydrogenase"/>
    <property type="match status" value="1"/>
</dbReference>
<dbReference type="InterPro" id="IPR022052">
    <property type="entry name" value="Histone-bd_RBBP4-like_N"/>
</dbReference>
<dbReference type="InterPro" id="IPR015943">
    <property type="entry name" value="WD40/YVTN_repeat-like_dom_sf"/>
</dbReference>
<dbReference type="InterPro" id="IPR036322">
    <property type="entry name" value="WD40_repeat_dom_sf"/>
</dbReference>
<dbReference type="InterPro" id="IPR001680">
    <property type="entry name" value="WD40_rpt"/>
</dbReference>
<dbReference type="InterPro" id="IPR050459">
    <property type="entry name" value="WD_repeat_RBAP46/RBAP48/MSI1"/>
</dbReference>
<dbReference type="PANTHER" id="PTHR22850">
    <property type="entry name" value="WD40 REPEAT FAMILY"/>
    <property type="match status" value="1"/>
</dbReference>
<dbReference type="Pfam" id="PF12265">
    <property type="entry name" value="CAF1C_H4-bd"/>
    <property type="match status" value="1"/>
</dbReference>
<dbReference type="Pfam" id="PF00400">
    <property type="entry name" value="WD40"/>
    <property type="match status" value="4"/>
</dbReference>
<dbReference type="SMART" id="SM00320">
    <property type="entry name" value="WD40"/>
    <property type="match status" value="6"/>
</dbReference>
<dbReference type="SUPFAM" id="SSF50978">
    <property type="entry name" value="WD40 repeat-like"/>
    <property type="match status" value="1"/>
</dbReference>
<dbReference type="PROSITE" id="PS50082">
    <property type="entry name" value="WD_REPEATS_2"/>
    <property type="match status" value="3"/>
</dbReference>
<dbReference type="PROSITE" id="PS50294">
    <property type="entry name" value="WD_REPEATS_REGION"/>
    <property type="match status" value="1"/>
</dbReference>
<organism>
    <name type="scientific">Arabidopsis thaliana</name>
    <name type="common">Mouse-ear cress</name>
    <dbReference type="NCBI Taxonomy" id="3702"/>
    <lineage>
        <taxon>Eukaryota</taxon>
        <taxon>Viridiplantae</taxon>
        <taxon>Streptophyta</taxon>
        <taxon>Embryophyta</taxon>
        <taxon>Tracheophyta</taxon>
        <taxon>Spermatophyta</taxon>
        <taxon>Magnoliopsida</taxon>
        <taxon>eudicotyledons</taxon>
        <taxon>Gunneridae</taxon>
        <taxon>Pentapetalae</taxon>
        <taxon>rosids</taxon>
        <taxon>malvids</taxon>
        <taxon>Brassicales</taxon>
        <taxon>Brassicaceae</taxon>
        <taxon>Camelineae</taxon>
        <taxon>Arabidopsis</taxon>
    </lineage>
</organism>
<protein>
    <recommendedName>
        <fullName evidence="17">WD-40 repeat-containing protein MSI4</fullName>
    </recommendedName>
    <alternativeName>
        <fullName evidence="14">Altered cold-responsive gene 1 protein</fullName>
    </alternativeName>
    <alternativeName>
        <fullName>Nucleosome remodeling factor complex component 4</fullName>
    </alternativeName>
    <alternativeName>
        <fullName evidence="16">Protein MULTICOPY SUPPRESSOR OF IRA1 4</fullName>
        <shortName evidence="16">AtMSI4</shortName>
    </alternativeName>
</protein>
<feature type="chain" id="PRO_0000051083" description="WD-40 repeat-containing protein MSI4">
    <location>
        <begin position="1"/>
        <end position="507"/>
    </location>
</feature>
<feature type="repeat" description="WD 1" evidence="2">
    <location>
        <begin position="95"/>
        <end position="137"/>
    </location>
</feature>
<feature type="repeat" description="WD 2" evidence="2">
    <location>
        <begin position="162"/>
        <end position="202"/>
    </location>
</feature>
<feature type="repeat" description="WD 3" evidence="2">
    <location>
        <begin position="217"/>
        <end position="257"/>
    </location>
</feature>
<feature type="repeat" description="WD 4" evidence="2">
    <location>
        <begin position="290"/>
        <end position="330"/>
    </location>
</feature>
<feature type="repeat" description="WD 5" evidence="2">
    <location>
        <begin position="335"/>
        <end position="375"/>
    </location>
</feature>
<feature type="repeat" description="WD 6" evidence="2">
    <location>
        <begin position="384"/>
        <end position="424"/>
    </location>
</feature>
<feature type="repeat" description="WD 7" evidence="2">
    <location>
        <begin position="439"/>
        <end position="486"/>
    </location>
</feature>
<feature type="region of interest" description="Disordered" evidence="3">
    <location>
        <begin position="1"/>
        <end position="66"/>
    </location>
</feature>
<feature type="region of interest" description="Disordered" evidence="3">
    <location>
        <begin position="258"/>
        <end position="282"/>
    </location>
</feature>
<feature type="short sequence motif" description="DWD box" evidence="2">
    <location>
        <begin position="308"/>
        <end position="323"/>
    </location>
</feature>
<feature type="compositionally biased region" description="Polar residues" evidence="3">
    <location>
        <begin position="258"/>
        <end position="272"/>
    </location>
</feature>
<feature type="modified residue" description="N-acetylmethionine">
    <location>
        <position position="1"/>
    </location>
</feature>
<feature type="mutagenesis site" description="In allele fve-1; loss of function allele that causes increased levels of FLC and late flowering." evidence="20">
    <original>A</original>
    <variation>V</variation>
    <location>
        <position position="222"/>
    </location>
</feature>
<feature type="mutagenesis site" description="In allele fve-2; loss of function allele that causes increased levels of FLC and late flowering." evidence="6">
    <original>D</original>
    <variation>N</variation>
    <location>
        <position position="241"/>
    </location>
</feature>
<feature type="sequence conflict" description="In Ref. 7; CAA85542." evidence="6" ref="7">
    <original>W</original>
    <variation>L</variation>
    <location>
        <position position="89"/>
    </location>
</feature>
<feature type="sequence conflict" description="In Ref. 7; CAA85542." evidence="17" ref="7">
    <original>V</original>
    <variation>F</variation>
    <location>
        <position position="126"/>
    </location>
</feature>
<feature type="sequence conflict" description="In Ref. 6; AAD03340." evidence="17" ref="6">
    <original>A</original>
    <variation>P</variation>
    <location>
        <position position="202"/>
    </location>
</feature>
<feature type="sequence conflict" description="In Ref. 6; AAD03340." evidence="17" ref="6">
    <original>T</original>
    <variation>P</variation>
    <location>
        <position position="270"/>
    </location>
</feature>
<feature type="sequence conflict" description="In Ref. 7; CAA85543." evidence="17" ref="7">
    <original>D</original>
    <variation>A</variation>
    <location>
        <position position="463"/>
    </location>
</feature>
<feature type="sequence conflict" description="In Ref. 7; CAA85543." evidence="17" ref="7">
    <original>V</original>
    <variation>F</variation>
    <location>
        <position position="489"/>
    </location>
</feature>
<feature type="sequence conflict" description="In Ref. 6; AAD03340." evidence="17" ref="6">
    <original>E</original>
    <variation>A</variation>
    <location>
        <position position="494"/>
    </location>
</feature>
<evidence type="ECO:0000250" key="1"/>
<evidence type="ECO:0000255" key="2"/>
<evidence type="ECO:0000256" key="3">
    <source>
        <dbReference type="SAM" id="MobiDB-lite"/>
    </source>
</evidence>
<evidence type="ECO:0000269" key="4">
    <source>
    </source>
</evidence>
<evidence type="ECO:0000269" key="5">
    <source>
    </source>
</evidence>
<evidence type="ECO:0000269" key="6">
    <source>
    </source>
</evidence>
<evidence type="ECO:0000269" key="7">
    <source>
    </source>
</evidence>
<evidence type="ECO:0000269" key="8">
    <source>
    </source>
</evidence>
<evidence type="ECO:0000269" key="9">
    <source>
    </source>
</evidence>
<evidence type="ECO:0000269" key="10">
    <source>
    </source>
</evidence>
<evidence type="ECO:0000269" key="11">
    <source>
    </source>
</evidence>
<evidence type="ECO:0000269" key="12">
    <source>
    </source>
</evidence>
<evidence type="ECO:0000303" key="13">
    <source>
    </source>
</evidence>
<evidence type="ECO:0000303" key="14">
    <source>
    </source>
</evidence>
<evidence type="ECO:0000303" key="15">
    <source>
    </source>
</evidence>
<evidence type="ECO:0000303" key="16">
    <source>
    </source>
</evidence>
<evidence type="ECO:0000305" key="17"/>
<evidence type="ECO:0000312" key="18">
    <source>
        <dbReference type="Araport" id="AT2G19520"/>
    </source>
</evidence>
<evidence type="ECO:0000312" key="19">
    <source>
        <dbReference type="EMBL" id="AAD10151.2"/>
    </source>
</evidence>
<evidence type="ECO:0007744" key="20">
    <source>
    </source>
</evidence>
<accession>O22607</accession>
<accession>Q42322</accession>
<accession>Q42323</accession>
<accession>Q58T21</accession>
<accession>Q93VF7</accession>
<accession>Q9SLD1</accession>